<gene>
    <name evidence="1" type="primary">lacZ</name>
    <name type="ordered locus">AHA_4101</name>
</gene>
<dbReference type="EC" id="3.2.1.23" evidence="1"/>
<dbReference type="EMBL" id="CP000462">
    <property type="protein sequence ID" value="ABK36888.1"/>
    <property type="molecule type" value="Genomic_DNA"/>
</dbReference>
<dbReference type="RefSeq" id="WP_011707763.1">
    <property type="nucleotide sequence ID" value="NC_008570.1"/>
</dbReference>
<dbReference type="RefSeq" id="YP_858525.1">
    <property type="nucleotide sequence ID" value="NC_008570.1"/>
</dbReference>
<dbReference type="SMR" id="A0KQH4"/>
<dbReference type="STRING" id="380703.AHA_4101"/>
<dbReference type="CAZy" id="GH2">
    <property type="family name" value="Glycoside Hydrolase Family 2"/>
</dbReference>
<dbReference type="EnsemblBacteria" id="ABK36888">
    <property type="protein sequence ID" value="ABK36888"/>
    <property type="gene ID" value="AHA_4101"/>
</dbReference>
<dbReference type="GeneID" id="4490243"/>
<dbReference type="KEGG" id="aha:AHA_4101"/>
<dbReference type="PATRIC" id="fig|380703.7.peg.4057"/>
<dbReference type="eggNOG" id="COG3250">
    <property type="taxonomic scope" value="Bacteria"/>
</dbReference>
<dbReference type="HOGENOM" id="CLU_002346_0_2_6"/>
<dbReference type="OrthoDB" id="9758603at2"/>
<dbReference type="Proteomes" id="UP000000756">
    <property type="component" value="Chromosome"/>
</dbReference>
<dbReference type="GO" id="GO:0009341">
    <property type="term" value="C:beta-galactosidase complex"/>
    <property type="evidence" value="ECO:0007669"/>
    <property type="project" value="InterPro"/>
</dbReference>
<dbReference type="GO" id="GO:0004565">
    <property type="term" value="F:beta-galactosidase activity"/>
    <property type="evidence" value="ECO:0007669"/>
    <property type="project" value="UniProtKB-EC"/>
</dbReference>
<dbReference type="GO" id="GO:0030246">
    <property type="term" value="F:carbohydrate binding"/>
    <property type="evidence" value="ECO:0007669"/>
    <property type="project" value="InterPro"/>
</dbReference>
<dbReference type="GO" id="GO:0000287">
    <property type="term" value="F:magnesium ion binding"/>
    <property type="evidence" value="ECO:0007669"/>
    <property type="project" value="UniProtKB-UniRule"/>
</dbReference>
<dbReference type="GO" id="GO:0005990">
    <property type="term" value="P:lactose catabolic process"/>
    <property type="evidence" value="ECO:0007669"/>
    <property type="project" value="TreeGrafter"/>
</dbReference>
<dbReference type="FunFam" id="3.20.20.80:FF:000018">
    <property type="entry name" value="Beta-galactosidase"/>
    <property type="match status" value="1"/>
</dbReference>
<dbReference type="Gene3D" id="2.70.98.10">
    <property type="match status" value="1"/>
</dbReference>
<dbReference type="Gene3D" id="2.60.120.260">
    <property type="entry name" value="Galactose-binding domain-like"/>
    <property type="match status" value="1"/>
</dbReference>
<dbReference type="Gene3D" id="3.20.20.80">
    <property type="entry name" value="Glycosidases"/>
    <property type="match status" value="1"/>
</dbReference>
<dbReference type="Gene3D" id="2.60.40.10">
    <property type="entry name" value="Immunoglobulins"/>
    <property type="match status" value="2"/>
</dbReference>
<dbReference type="HAMAP" id="MF_01687">
    <property type="entry name" value="Beta_gal"/>
    <property type="match status" value="1"/>
</dbReference>
<dbReference type="InterPro" id="IPR004199">
    <property type="entry name" value="B-gal_small/dom_5"/>
</dbReference>
<dbReference type="InterPro" id="IPR050347">
    <property type="entry name" value="Bact_Beta-galactosidase"/>
</dbReference>
<dbReference type="InterPro" id="IPR036156">
    <property type="entry name" value="Beta-gal/glucu_dom_sf"/>
</dbReference>
<dbReference type="InterPro" id="IPR011013">
    <property type="entry name" value="Gal_mutarotase_sf_dom"/>
</dbReference>
<dbReference type="InterPro" id="IPR008979">
    <property type="entry name" value="Galactose-bd-like_sf"/>
</dbReference>
<dbReference type="InterPro" id="IPR014718">
    <property type="entry name" value="GH-type_carb-bd"/>
</dbReference>
<dbReference type="InterPro" id="IPR006101">
    <property type="entry name" value="Glyco_hydro_2"/>
</dbReference>
<dbReference type="InterPro" id="IPR023933">
    <property type="entry name" value="Glyco_hydro_2_beta_Galsidase"/>
</dbReference>
<dbReference type="InterPro" id="IPR006103">
    <property type="entry name" value="Glyco_hydro_2_cat"/>
</dbReference>
<dbReference type="InterPro" id="IPR023230">
    <property type="entry name" value="Glyco_hydro_2_CS"/>
</dbReference>
<dbReference type="InterPro" id="IPR006102">
    <property type="entry name" value="Glyco_hydro_2_Ig-like"/>
</dbReference>
<dbReference type="InterPro" id="IPR006104">
    <property type="entry name" value="Glyco_hydro_2_N"/>
</dbReference>
<dbReference type="InterPro" id="IPR017853">
    <property type="entry name" value="Glycoside_hydrolase_SF"/>
</dbReference>
<dbReference type="InterPro" id="IPR013783">
    <property type="entry name" value="Ig-like_fold"/>
</dbReference>
<dbReference type="InterPro" id="IPR032312">
    <property type="entry name" value="LacZ_4"/>
</dbReference>
<dbReference type="NCBIfam" id="NF007074">
    <property type="entry name" value="PRK09525.1"/>
    <property type="match status" value="1"/>
</dbReference>
<dbReference type="PANTHER" id="PTHR46323">
    <property type="entry name" value="BETA-GALACTOSIDASE"/>
    <property type="match status" value="1"/>
</dbReference>
<dbReference type="PANTHER" id="PTHR46323:SF2">
    <property type="entry name" value="BETA-GALACTOSIDASE"/>
    <property type="match status" value="1"/>
</dbReference>
<dbReference type="Pfam" id="PF02929">
    <property type="entry name" value="Bgal_small_N"/>
    <property type="match status" value="1"/>
</dbReference>
<dbReference type="Pfam" id="PF00703">
    <property type="entry name" value="Glyco_hydro_2"/>
    <property type="match status" value="1"/>
</dbReference>
<dbReference type="Pfam" id="PF02836">
    <property type="entry name" value="Glyco_hydro_2_C"/>
    <property type="match status" value="1"/>
</dbReference>
<dbReference type="Pfam" id="PF02837">
    <property type="entry name" value="Glyco_hydro_2_N"/>
    <property type="match status" value="1"/>
</dbReference>
<dbReference type="Pfam" id="PF16353">
    <property type="entry name" value="LacZ_4"/>
    <property type="match status" value="1"/>
</dbReference>
<dbReference type="PRINTS" id="PR00132">
    <property type="entry name" value="GLHYDRLASE2"/>
</dbReference>
<dbReference type="SMART" id="SM01038">
    <property type="entry name" value="Bgal_small_N"/>
    <property type="match status" value="1"/>
</dbReference>
<dbReference type="SUPFAM" id="SSF51445">
    <property type="entry name" value="(Trans)glycosidases"/>
    <property type="match status" value="1"/>
</dbReference>
<dbReference type="SUPFAM" id="SSF49303">
    <property type="entry name" value="beta-Galactosidase/glucuronidase domain"/>
    <property type="match status" value="2"/>
</dbReference>
<dbReference type="SUPFAM" id="SSF74650">
    <property type="entry name" value="Galactose mutarotase-like"/>
    <property type="match status" value="1"/>
</dbReference>
<dbReference type="SUPFAM" id="SSF49785">
    <property type="entry name" value="Galactose-binding domain-like"/>
    <property type="match status" value="1"/>
</dbReference>
<dbReference type="PROSITE" id="PS00719">
    <property type="entry name" value="GLYCOSYL_HYDROL_F2_1"/>
    <property type="match status" value="1"/>
</dbReference>
<keyword id="KW-0326">Glycosidase</keyword>
<keyword id="KW-0378">Hydrolase</keyword>
<keyword id="KW-0460">Magnesium</keyword>
<keyword id="KW-0479">Metal-binding</keyword>
<keyword id="KW-1185">Reference proteome</keyword>
<keyword id="KW-0915">Sodium</keyword>
<accession>A0KQH4</accession>
<feature type="chain" id="PRO_0000366979" description="Beta-galactosidase">
    <location>
        <begin position="1"/>
        <end position="1025"/>
    </location>
</feature>
<feature type="active site" description="Proton donor" evidence="1">
    <location>
        <position position="462"/>
    </location>
</feature>
<feature type="active site" description="Nucleophile" evidence="1">
    <location>
        <position position="538"/>
    </location>
</feature>
<feature type="binding site" evidence="1">
    <location>
        <position position="105"/>
    </location>
    <ligand>
        <name>substrate</name>
    </ligand>
</feature>
<feature type="binding site" evidence="1">
    <location>
        <position position="204"/>
    </location>
    <ligand>
        <name>Na(+)</name>
        <dbReference type="ChEBI" id="CHEBI:29101"/>
    </ligand>
</feature>
<feature type="binding site" evidence="1">
    <location>
        <position position="204"/>
    </location>
    <ligand>
        <name>substrate</name>
    </ligand>
</feature>
<feature type="binding site" evidence="1">
    <location>
        <position position="417"/>
    </location>
    <ligand>
        <name>Mg(2+)</name>
        <dbReference type="ChEBI" id="CHEBI:18420"/>
        <label>1</label>
    </ligand>
</feature>
<feature type="binding site" evidence="1">
    <location>
        <position position="419"/>
    </location>
    <ligand>
        <name>Mg(2+)</name>
        <dbReference type="ChEBI" id="CHEBI:18420"/>
        <label>1</label>
    </ligand>
</feature>
<feature type="binding site" evidence="1">
    <location>
        <position position="462"/>
    </location>
    <ligand>
        <name>Mg(2+)</name>
        <dbReference type="ChEBI" id="CHEBI:18420"/>
        <label>1</label>
    </ligand>
</feature>
<feature type="binding site" evidence="1">
    <location>
        <position position="462"/>
    </location>
    <ligand>
        <name>substrate</name>
    </ligand>
</feature>
<feature type="binding site" evidence="1">
    <location>
        <begin position="538"/>
        <end position="541"/>
    </location>
    <ligand>
        <name>substrate</name>
    </ligand>
</feature>
<feature type="binding site" evidence="1">
    <location>
        <position position="598"/>
    </location>
    <ligand>
        <name>Mg(2+)</name>
        <dbReference type="ChEBI" id="CHEBI:18420"/>
        <label>2</label>
    </ligand>
</feature>
<feature type="binding site" evidence="1">
    <location>
        <position position="602"/>
    </location>
    <ligand>
        <name>Na(+)</name>
        <dbReference type="ChEBI" id="CHEBI:29101"/>
    </ligand>
</feature>
<feature type="binding site" evidence="1">
    <location>
        <position position="605"/>
    </location>
    <ligand>
        <name>Na(+)</name>
        <dbReference type="ChEBI" id="CHEBI:29101"/>
    </ligand>
</feature>
<feature type="binding site" evidence="1">
    <location>
        <position position="605"/>
    </location>
    <ligand>
        <name>substrate</name>
    </ligand>
</feature>
<feature type="binding site" evidence="1">
    <location>
        <position position="1003"/>
    </location>
    <ligand>
        <name>substrate</name>
    </ligand>
</feature>
<feature type="site" description="Transition state stabilizer" evidence="1">
    <location>
        <position position="358"/>
    </location>
</feature>
<feature type="site" description="Transition state stabilizer" evidence="1">
    <location>
        <position position="392"/>
    </location>
</feature>
<proteinExistence type="inferred from homology"/>
<organism>
    <name type="scientific">Aeromonas hydrophila subsp. hydrophila (strain ATCC 7966 / DSM 30187 / BCRC 13018 / CCUG 14551 / JCM 1027 / KCTC 2358 / NCIMB 9240 / NCTC 8049)</name>
    <dbReference type="NCBI Taxonomy" id="380703"/>
    <lineage>
        <taxon>Bacteria</taxon>
        <taxon>Pseudomonadati</taxon>
        <taxon>Pseudomonadota</taxon>
        <taxon>Gammaproteobacteria</taxon>
        <taxon>Aeromonadales</taxon>
        <taxon>Aeromonadaceae</taxon>
        <taxon>Aeromonas</taxon>
    </lineage>
</organism>
<evidence type="ECO:0000255" key="1">
    <source>
        <dbReference type="HAMAP-Rule" id="MF_01687"/>
    </source>
</evidence>
<protein>
    <recommendedName>
        <fullName evidence="1">Beta-galactosidase</fullName>
        <shortName evidence="1">Beta-gal</shortName>
        <ecNumber evidence="1">3.2.1.23</ecNumber>
    </recommendedName>
    <alternativeName>
        <fullName evidence="1">Lactase</fullName>
    </alternativeName>
</protein>
<comment type="catalytic activity">
    <reaction evidence="1">
        <text>Hydrolysis of terminal non-reducing beta-D-galactose residues in beta-D-galactosides.</text>
        <dbReference type="EC" id="3.2.1.23"/>
    </reaction>
</comment>
<comment type="cofactor">
    <cofactor evidence="1">
        <name>Mg(2+)</name>
        <dbReference type="ChEBI" id="CHEBI:18420"/>
    </cofactor>
    <text evidence="1">Binds 2 magnesium ions per monomer.</text>
</comment>
<comment type="cofactor">
    <cofactor evidence="1">
        <name>Na(+)</name>
        <dbReference type="ChEBI" id="CHEBI:29101"/>
    </cofactor>
    <text evidence="1">Binds 1 sodium ion per monomer.</text>
</comment>
<comment type="subunit">
    <text evidence="1">Homotetramer.</text>
</comment>
<comment type="similarity">
    <text evidence="1">Belongs to the glycosyl hydrolase 2 family.</text>
</comment>
<reference key="1">
    <citation type="journal article" date="2006" name="J. Bacteriol.">
        <title>Genome sequence of Aeromonas hydrophila ATCC 7966T: jack of all trades.</title>
        <authorList>
            <person name="Seshadri R."/>
            <person name="Joseph S.W."/>
            <person name="Chopra A.K."/>
            <person name="Sha J."/>
            <person name="Shaw J."/>
            <person name="Graf J."/>
            <person name="Haft D.H."/>
            <person name="Wu M."/>
            <person name="Ren Q."/>
            <person name="Rosovitz M.J."/>
            <person name="Madupu R."/>
            <person name="Tallon L."/>
            <person name="Kim M."/>
            <person name="Jin S."/>
            <person name="Vuong H."/>
            <person name="Stine O.C."/>
            <person name="Ali A."/>
            <person name="Horneman A.J."/>
            <person name="Heidelberg J.F."/>
        </authorList>
    </citation>
    <scope>NUCLEOTIDE SEQUENCE [LARGE SCALE GENOMIC DNA]</scope>
    <source>
        <strain>ATCC 7966 / DSM 30187 / BCRC 13018 / CCUG 14551 / JCM 1027 / KCTC 2358 / NCIMB 9240 / NCTC 8049</strain>
    </source>
</reference>
<name>BGAL_AERHH</name>
<sequence>MLREIVARQDWQTQAITAVNRLPAHTPLFSWRSEAAARDDLASPSRTLLDGEWRFSFFEAPELVPEHWLVEDLPDACAIKVPGNWQLDAAYPGLRLATDVPIYTNIKYPFPCDPPRVPAENPTGCYSREFSVPADWLASGQTRIIFDGVDSAFHLFCNGRWVGYSQDSRLPAEFDLTSFLCGGDNRLAVLVLRWSDGSYLEDQDMWRMSGIFRSVSLLHKPVRHLMDIRVTPELDACYRDGRLKIALQAANGAGLSVAACLYDGGERVATLRQPIGTQAIDEKGAYDDRAECWLEVAAPRKWSAETPHLYRLTLTLLDEQGEPIESEAYDVGFRAVEIRGGLLRVNGQPLLIRGANRHEHDVASGHVVTPAAIEQDLLLMKRHNFNSVRCSHYPNHPELYRLCDRLGLYVVDEANLETHGMTPMGRLARDPAWSNAFLERVTRMVARDFNHPSIIIWSLGNESGYGPAHDAMYGWVKRADPSRPVQYEGGGADTPATDIICPMYARTHQDQPFPAVPKWALAKWIGLPGETRPLILCEYAHAMGNSLGGYAHYWQAFRDHPRLQGGFVWDWVDQGLDKLTDDGRHFWAYGGDFGDTPNDRQFCCNGLVFPDRTPHPALFEARRAQQPFGLTLLERQPLTVEIRSEYLFRETDNERLQWRLCEDGVVVSQGECPLTLAPQGSMMLTLLERLPAFAPGALAWLDLAIVQPAATPWSAVGHEVARQQCMLPAPLSLPVARTPATFIELADGWQIRAAASEWRLDKASGRVQSWCKLGREQLKEAIADHFYRAPLDNDIGTSEADHADPNAWIARWQEAGLNELQHRCLDMVVSPDQGVVTVHHGYFVGDALKLLTRWRHEFDQDGAMRLAIEVQVAAEMPSLPRIGARLWLTDEVLATGEEVSWLGRGPHENYPDRLLAADLGRWQSPLDVLHTAYVFPTDNGLRCDTRQLQLGSIEVEGLFHFSLSRFSQQQLAQARHQTDLVAEGGLHLCLDGFHMGIGGDDSWSQSVRPEYWLQPGGYYWNCVLR</sequence>